<evidence type="ECO:0000255" key="1">
    <source>
        <dbReference type="HAMAP-Rule" id="MF_00440"/>
    </source>
</evidence>
<sequence>MKCPYCGYPDSRVIDSRPTDDNTAIRRRRECLKCGKRFTTYEKVEQLPILVIKKDNRRELYDKEKILRGMIKACEKRPVPIKVLEEITDEIDRKIVNSMVREITSAEIGEMVMEKLKSVDEVAYVRFASVYRQFKDINTFMDELKKLLKENEEKKQKE</sequence>
<gene>
    <name evidence="1" type="primary">nrdR</name>
    <name type="ordered locus">TTE1634</name>
</gene>
<name>NRDR_CALS4</name>
<proteinExistence type="inferred from homology"/>
<reference key="1">
    <citation type="journal article" date="2002" name="Genome Res.">
        <title>A complete sequence of the T. tengcongensis genome.</title>
        <authorList>
            <person name="Bao Q."/>
            <person name="Tian Y."/>
            <person name="Li W."/>
            <person name="Xu Z."/>
            <person name="Xuan Z."/>
            <person name="Hu S."/>
            <person name="Dong W."/>
            <person name="Yang J."/>
            <person name="Chen Y."/>
            <person name="Xue Y."/>
            <person name="Xu Y."/>
            <person name="Lai X."/>
            <person name="Huang L."/>
            <person name="Dong X."/>
            <person name="Ma Y."/>
            <person name="Ling L."/>
            <person name="Tan H."/>
            <person name="Chen R."/>
            <person name="Wang J."/>
            <person name="Yu J."/>
            <person name="Yang H."/>
        </authorList>
    </citation>
    <scope>NUCLEOTIDE SEQUENCE [LARGE SCALE GENOMIC DNA]</scope>
    <source>
        <strain>DSM 15242 / JCM 11007 / NBRC 100824 / MB4</strain>
    </source>
</reference>
<comment type="function">
    <text evidence="1">Negatively regulates transcription of bacterial ribonucleotide reductase nrd genes and operons by binding to NrdR-boxes.</text>
</comment>
<comment type="cofactor">
    <cofactor evidence="1">
        <name>Zn(2+)</name>
        <dbReference type="ChEBI" id="CHEBI:29105"/>
    </cofactor>
    <text evidence="1">Binds 1 zinc ion.</text>
</comment>
<comment type="similarity">
    <text evidence="1">Belongs to the NrdR family.</text>
</comment>
<keyword id="KW-0067">ATP-binding</keyword>
<keyword id="KW-0238">DNA-binding</keyword>
<keyword id="KW-0479">Metal-binding</keyword>
<keyword id="KW-0547">Nucleotide-binding</keyword>
<keyword id="KW-1185">Reference proteome</keyword>
<keyword id="KW-0678">Repressor</keyword>
<keyword id="KW-0804">Transcription</keyword>
<keyword id="KW-0805">Transcription regulation</keyword>
<keyword id="KW-0862">Zinc</keyword>
<keyword id="KW-0863">Zinc-finger</keyword>
<feature type="chain" id="PRO_0000182371" description="Transcriptional repressor NrdR">
    <location>
        <begin position="1"/>
        <end position="158"/>
    </location>
</feature>
<feature type="domain" description="ATP-cone" evidence="1">
    <location>
        <begin position="49"/>
        <end position="139"/>
    </location>
</feature>
<feature type="zinc finger region" evidence="1">
    <location>
        <begin position="3"/>
        <end position="34"/>
    </location>
</feature>
<dbReference type="EMBL" id="AE008691">
    <property type="protein sequence ID" value="AAM24836.1"/>
    <property type="molecule type" value="Genomic_DNA"/>
</dbReference>
<dbReference type="RefSeq" id="WP_011025857.1">
    <property type="nucleotide sequence ID" value="NZ_JANUCV010000001.1"/>
</dbReference>
<dbReference type="SMR" id="Q8R9H6"/>
<dbReference type="STRING" id="273068.TTE1634"/>
<dbReference type="KEGG" id="tte:TTE1634"/>
<dbReference type="eggNOG" id="COG1327">
    <property type="taxonomic scope" value="Bacteria"/>
</dbReference>
<dbReference type="HOGENOM" id="CLU_108412_0_0_9"/>
<dbReference type="OrthoDB" id="9807461at2"/>
<dbReference type="Proteomes" id="UP000000555">
    <property type="component" value="Chromosome"/>
</dbReference>
<dbReference type="GO" id="GO:0005524">
    <property type="term" value="F:ATP binding"/>
    <property type="evidence" value="ECO:0007669"/>
    <property type="project" value="UniProtKB-KW"/>
</dbReference>
<dbReference type="GO" id="GO:0003677">
    <property type="term" value="F:DNA binding"/>
    <property type="evidence" value="ECO:0007669"/>
    <property type="project" value="UniProtKB-KW"/>
</dbReference>
<dbReference type="GO" id="GO:0008270">
    <property type="term" value="F:zinc ion binding"/>
    <property type="evidence" value="ECO:0007669"/>
    <property type="project" value="UniProtKB-UniRule"/>
</dbReference>
<dbReference type="GO" id="GO:0045892">
    <property type="term" value="P:negative regulation of DNA-templated transcription"/>
    <property type="evidence" value="ECO:0007669"/>
    <property type="project" value="UniProtKB-UniRule"/>
</dbReference>
<dbReference type="HAMAP" id="MF_00440">
    <property type="entry name" value="NrdR"/>
    <property type="match status" value="1"/>
</dbReference>
<dbReference type="InterPro" id="IPR005144">
    <property type="entry name" value="ATP-cone_dom"/>
</dbReference>
<dbReference type="InterPro" id="IPR055173">
    <property type="entry name" value="NrdR-like_N"/>
</dbReference>
<dbReference type="InterPro" id="IPR003796">
    <property type="entry name" value="RNR_NrdR-like"/>
</dbReference>
<dbReference type="NCBIfam" id="TIGR00244">
    <property type="entry name" value="transcriptional regulator NrdR"/>
    <property type="match status" value="1"/>
</dbReference>
<dbReference type="PANTHER" id="PTHR30455">
    <property type="entry name" value="TRANSCRIPTIONAL REPRESSOR NRDR"/>
    <property type="match status" value="1"/>
</dbReference>
<dbReference type="PANTHER" id="PTHR30455:SF2">
    <property type="entry name" value="TRANSCRIPTIONAL REPRESSOR NRDR"/>
    <property type="match status" value="1"/>
</dbReference>
<dbReference type="Pfam" id="PF03477">
    <property type="entry name" value="ATP-cone"/>
    <property type="match status" value="1"/>
</dbReference>
<dbReference type="Pfam" id="PF22811">
    <property type="entry name" value="Zn_ribbon_NrdR"/>
    <property type="match status" value="1"/>
</dbReference>
<dbReference type="PROSITE" id="PS51161">
    <property type="entry name" value="ATP_CONE"/>
    <property type="match status" value="1"/>
</dbReference>
<protein>
    <recommendedName>
        <fullName evidence="1">Transcriptional repressor NrdR</fullName>
    </recommendedName>
</protein>
<organism>
    <name type="scientific">Caldanaerobacter subterraneus subsp. tengcongensis (strain DSM 15242 / JCM 11007 / NBRC 100824 / MB4)</name>
    <name type="common">Thermoanaerobacter tengcongensis</name>
    <dbReference type="NCBI Taxonomy" id="273068"/>
    <lineage>
        <taxon>Bacteria</taxon>
        <taxon>Bacillati</taxon>
        <taxon>Bacillota</taxon>
        <taxon>Clostridia</taxon>
        <taxon>Thermoanaerobacterales</taxon>
        <taxon>Thermoanaerobacteraceae</taxon>
        <taxon>Caldanaerobacter</taxon>
    </lineage>
</organism>
<accession>Q8R9H6</accession>